<keyword id="KW-1185">Reference proteome</keyword>
<sequence>MKIATLSIGDELLRGEVVDTNAARIAARLADAGLAVGRHLTVGDDEGEIEAALGMLAPAHDAVIVTGGLGPTDDDVTARAAARATGRRLVLNEAALDRLRDFFSRRGRELYPANERQCLLPAKAGLIPNALGTACGFHLLHGECFLVFLPGVPAEMARMLEESVVPLVLDRRSGPEVTRTAVLTLFGLSEAEIGGRLSGLERSRGGLGIAYCVDFPVVQVKLRATARSEEEAAEIIAGGLPLVRERLGDVIVAEGDNTIDTAVARLFREKGLTLALAESCTGGLIAKRITDVAGSSAYFFMGLVTYANEAKERLLGVPTALLAEKGAVSADVARAMARGARHVAGSDLALAVTGIAGPDGGSDDKPVGTVYLALADRAGCSVKSYRFAGERDAIRTVTAVTALDWLRRRLLTA</sequence>
<gene>
    <name type="ordered locus">GSU0143</name>
</gene>
<accession>Q74GV1</accession>
<protein>
    <recommendedName>
        <fullName evidence="1">CinA-like protein</fullName>
    </recommendedName>
</protein>
<name>CINAL_GEOSL</name>
<evidence type="ECO:0000255" key="1">
    <source>
        <dbReference type="HAMAP-Rule" id="MF_00226"/>
    </source>
</evidence>
<comment type="similarity">
    <text evidence="1">Belongs to the CinA family.</text>
</comment>
<proteinExistence type="inferred from homology"/>
<dbReference type="EMBL" id="AE017180">
    <property type="protein sequence ID" value="AAR33478.1"/>
    <property type="molecule type" value="Genomic_DNA"/>
</dbReference>
<dbReference type="RefSeq" id="NP_951205.1">
    <property type="nucleotide sequence ID" value="NC_002939.5"/>
</dbReference>
<dbReference type="RefSeq" id="WP_010940819.1">
    <property type="nucleotide sequence ID" value="NC_002939.5"/>
</dbReference>
<dbReference type="SMR" id="Q74GV1"/>
<dbReference type="FunCoup" id="Q74GV1">
    <property type="interactions" value="123"/>
</dbReference>
<dbReference type="STRING" id="243231.GSU0143"/>
<dbReference type="EnsemblBacteria" id="AAR33478">
    <property type="protein sequence ID" value="AAR33478"/>
    <property type="gene ID" value="GSU0143"/>
</dbReference>
<dbReference type="KEGG" id="gsu:GSU0143"/>
<dbReference type="PATRIC" id="fig|243231.5.peg.144"/>
<dbReference type="eggNOG" id="COG1058">
    <property type="taxonomic scope" value="Bacteria"/>
</dbReference>
<dbReference type="eggNOG" id="COG1546">
    <property type="taxonomic scope" value="Bacteria"/>
</dbReference>
<dbReference type="HOGENOM" id="CLU_030805_9_2_7"/>
<dbReference type="InParanoid" id="Q74GV1"/>
<dbReference type="OrthoDB" id="9801454at2"/>
<dbReference type="Proteomes" id="UP000000577">
    <property type="component" value="Chromosome"/>
</dbReference>
<dbReference type="CDD" id="cd00885">
    <property type="entry name" value="cinA"/>
    <property type="match status" value="1"/>
</dbReference>
<dbReference type="Gene3D" id="3.30.70.2860">
    <property type="match status" value="1"/>
</dbReference>
<dbReference type="Gene3D" id="3.90.950.20">
    <property type="entry name" value="CinA-like"/>
    <property type="match status" value="1"/>
</dbReference>
<dbReference type="Gene3D" id="3.40.980.10">
    <property type="entry name" value="MoaB/Mog-like domain"/>
    <property type="match status" value="1"/>
</dbReference>
<dbReference type="HAMAP" id="MF_00226_B">
    <property type="entry name" value="CinA_B"/>
    <property type="match status" value="1"/>
</dbReference>
<dbReference type="InterPro" id="IPR050101">
    <property type="entry name" value="CinA"/>
</dbReference>
<dbReference type="InterPro" id="IPR036653">
    <property type="entry name" value="CinA-like_C"/>
</dbReference>
<dbReference type="InterPro" id="IPR008136">
    <property type="entry name" value="CinA_C"/>
</dbReference>
<dbReference type="InterPro" id="IPR041424">
    <property type="entry name" value="CinA_KH"/>
</dbReference>
<dbReference type="InterPro" id="IPR008135">
    <property type="entry name" value="Competence-induced_CinA"/>
</dbReference>
<dbReference type="InterPro" id="IPR036425">
    <property type="entry name" value="MoaB/Mog-like_dom_sf"/>
</dbReference>
<dbReference type="InterPro" id="IPR001453">
    <property type="entry name" value="MoaB/Mog_dom"/>
</dbReference>
<dbReference type="NCBIfam" id="TIGR00200">
    <property type="entry name" value="cinA_nterm"/>
    <property type="match status" value="1"/>
</dbReference>
<dbReference type="NCBIfam" id="TIGR00177">
    <property type="entry name" value="molyb_syn"/>
    <property type="match status" value="1"/>
</dbReference>
<dbReference type="NCBIfam" id="TIGR00199">
    <property type="entry name" value="PncC_domain"/>
    <property type="match status" value="1"/>
</dbReference>
<dbReference type="NCBIfam" id="NF001813">
    <property type="entry name" value="PRK00549.1"/>
    <property type="match status" value="1"/>
</dbReference>
<dbReference type="PANTHER" id="PTHR13939">
    <property type="entry name" value="NICOTINAMIDE-NUCLEOTIDE AMIDOHYDROLASE PNCC"/>
    <property type="match status" value="1"/>
</dbReference>
<dbReference type="PANTHER" id="PTHR13939:SF0">
    <property type="entry name" value="NMN AMIDOHYDROLASE-LIKE PROTEIN YFAY"/>
    <property type="match status" value="1"/>
</dbReference>
<dbReference type="Pfam" id="PF02464">
    <property type="entry name" value="CinA"/>
    <property type="match status" value="1"/>
</dbReference>
<dbReference type="Pfam" id="PF18146">
    <property type="entry name" value="CinA_KH"/>
    <property type="match status" value="1"/>
</dbReference>
<dbReference type="Pfam" id="PF00994">
    <property type="entry name" value="MoCF_biosynth"/>
    <property type="match status" value="1"/>
</dbReference>
<dbReference type="PIRSF" id="PIRSF006728">
    <property type="entry name" value="CinA"/>
    <property type="match status" value="1"/>
</dbReference>
<dbReference type="SMART" id="SM00852">
    <property type="entry name" value="MoCF_biosynth"/>
    <property type="match status" value="1"/>
</dbReference>
<dbReference type="SUPFAM" id="SSF142433">
    <property type="entry name" value="CinA-like"/>
    <property type="match status" value="1"/>
</dbReference>
<dbReference type="SUPFAM" id="SSF53218">
    <property type="entry name" value="Molybdenum cofactor biosynthesis proteins"/>
    <property type="match status" value="1"/>
</dbReference>
<reference key="1">
    <citation type="journal article" date="2003" name="Science">
        <title>Genome of Geobacter sulfurreducens: metal reduction in subsurface environments.</title>
        <authorList>
            <person name="Methe B.A."/>
            <person name="Nelson K.E."/>
            <person name="Eisen J.A."/>
            <person name="Paulsen I.T."/>
            <person name="Nelson W.C."/>
            <person name="Heidelberg J.F."/>
            <person name="Wu D."/>
            <person name="Wu M."/>
            <person name="Ward N.L."/>
            <person name="Beanan M.J."/>
            <person name="Dodson R.J."/>
            <person name="Madupu R."/>
            <person name="Brinkac L.M."/>
            <person name="Daugherty S.C."/>
            <person name="DeBoy R.T."/>
            <person name="Durkin A.S."/>
            <person name="Gwinn M.L."/>
            <person name="Kolonay J.F."/>
            <person name="Sullivan S.A."/>
            <person name="Haft D.H."/>
            <person name="Selengut J."/>
            <person name="Davidsen T.M."/>
            <person name="Zafar N."/>
            <person name="White O."/>
            <person name="Tran B."/>
            <person name="Romero C."/>
            <person name="Forberger H.A."/>
            <person name="Weidman J.F."/>
            <person name="Khouri H.M."/>
            <person name="Feldblyum T.V."/>
            <person name="Utterback T.R."/>
            <person name="Van Aken S.E."/>
            <person name="Lovley D.R."/>
            <person name="Fraser C.M."/>
        </authorList>
    </citation>
    <scope>NUCLEOTIDE SEQUENCE [LARGE SCALE GENOMIC DNA]</scope>
    <source>
        <strain>ATCC 51573 / DSM 12127 / PCA</strain>
    </source>
</reference>
<organism>
    <name type="scientific">Geobacter sulfurreducens (strain ATCC 51573 / DSM 12127 / PCA)</name>
    <dbReference type="NCBI Taxonomy" id="243231"/>
    <lineage>
        <taxon>Bacteria</taxon>
        <taxon>Pseudomonadati</taxon>
        <taxon>Thermodesulfobacteriota</taxon>
        <taxon>Desulfuromonadia</taxon>
        <taxon>Geobacterales</taxon>
        <taxon>Geobacteraceae</taxon>
        <taxon>Geobacter</taxon>
    </lineage>
</organism>
<feature type="chain" id="PRO_0000156761" description="CinA-like protein">
    <location>
        <begin position="1"/>
        <end position="413"/>
    </location>
</feature>